<protein>
    <recommendedName>
        <fullName evidence="1">Small ribosomal subunit protein uS14</fullName>
    </recommendedName>
    <alternativeName>
        <fullName evidence="2">30S ribosomal protein S14 type Z</fullName>
    </alternativeName>
</protein>
<comment type="function">
    <text evidence="1">Binds 16S rRNA, required for the assembly of 30S particles and may also be responsible for determining the conformation of the 16S rRNA at the A site.</text>
</comment>
<comment type="cofactor">
    <cofactor evidence="1">
        <name>Zn(2+)</name>
        <dbReference type="ChEBI" id="CHEBI:29105"/>
    </cofactor>
    <text evidence="1">Binds 1 zinc ion per subunit.</text>
</comment>
<comment type="subunit">
    <text evidence="1">Part of the 30S ribosomal subunit. Contacts proteins S3 and S10.</text>
</comment>
<comment type="similarity">
    <text evidence="1">Belongs to the universal ribosomal protein uS14 family. Zinc-binding uS14 subfamily.</text>
</comment>
<keyword id="KW-0479">Metal-binding</keyword>
<keyword id="KW-0687">Ribonucleoprotein</keyword>
<keyword id="KW-0689">Ribosomal protein</keyword>
<keyword id="KW-0694">RNA-binding</keyword>
<keyword id="KW-0699">rRNA-binding</keyword>
<keyword id="KW-0862">Zinc</keyword>
<proteinExistence type="inferred from homology"/>
<organism>
    <name type="scientific">Aquifex pyrophilus</name>
    <dbReference type="NCBI Taxonomy" id="2714"/>
    <lineage>
        <taxon>Bacteria</taxon>
        <taxon>Pseudomonadati</taxon>
        <taxon>Aquificota</taxon>
        <taxon>Aquificia</taxon>
        <taxon>Aquificales</taxon>
        <taxon>Aquificaceae</taxon>
        <taxon>Aquifex</taxon>
    </lineage>
</organism>
<evidence type="ECO:0000255" key="1">
    <source>
        <dbReference type="HAMAP-Rule" id="MF_01364"/>
    </source>
</evidence>
<evidence type="ECO:0000305" key="2"/>
<reference key="1">
    <citation type="journal article" date="2000" name="J. Mol. Evol.">
        <title>Phylogenetic depth of the bacterial genera Aquifex and Thermotoga inferred from analysis of ribosomal protein, elongation factor, and RNA polymerase subunit sequences.</title>
        <authorList>
            <person name="Bocchetta M."/>
            <person name="Gribaldo S."/>
            <person name="Sanangelantoni A.M."/>
            <person name="Cammarano P."/>
        </authorList>
    </citation>
    <scope>NUCLEOTIDE SEQUENCE [GENOMIC DNA]</scope>
    <source>
        <strain>DSM 6858 / JCM 9492 / Kol5A</strain>
    </source>
</reference>
<feature type="chain" id="PRO_0000130869" description="Small ribosomal subunit protein uS14">
    <location>
        <begin position="1"/>
        <end position="62"/>
    </location>
</feature>
<feature type="binding site" evidence="1">
    <location>
        <position position="25"/>
    </location>
    <ligand>
        <name>Zn(2+)</name>
        <dbReference type="ChEBI" id="CHEBI:29105"/>
    </ligand>
</feature>
<feature type="binding site" evidence="1">
    <location>
        <position position="28"/>
    </location>
    <ligand>
        <name>Zn(2+)</name>
        <dbReference type="ChEBI" id="CHEBI:29105"/>
    </ligand>
</feature>
<feature type="binding site" evidence="1">
    <location>
        <position position="41"/>
    </location>
    <ligand>
        <name>Zn(2+)</name>
        <dbReference type="ChEBI" id="CHEBI:29105"/>
    </ligand>
</feature>
<feature type="binding site" evidence="1">
    <location>
        <position position="44"/>
    </location>
    <ligand>
        <name>Zn(2+)</name>
        <dbReference type="ChEBI" id="CHEBI:29105"/>
    </ligand>
</feature>
<name>RS14Z_AQUPY</name>
<sequence length="62" mass="7503">MPRKAKVAKDLMYYPKWKSRKKNRCPICGRPRAFIRYFNMCRICFREHALRGDLPGVRKASW</sequence>
<dbReference type="EMBL" id="AF040101">
    <property type="protein sequence ID" value="AAD08796.1"/>
    <property type="molecule type" value="Genomic_DNA"/>
</dbReference>
<dbReference type="SMR" id="P0A4B2"/>
<dbReference type="GO" id="GO:0005737">
    <property type="term" value="C:cytoplasm"/>
    <property type="evidence" value="ECO:0007669"/>
    <property type="project" value="UniProtKB-ARBA"/>
</dbReference>
<dbReference type="GO" id="GO:0015935">
    <property type="term" value="C:small ribosomal subunit"/>
    <property type="evidence" value="ECO:0007669"/>
    <property type="project" value="TreeGrafter"/>
</dbReference>
<dbReference type="GO" id="GO:0019843">
    <property type="term" value="F:rRNA binding"/>
    <property type="evidence" value="ECO:0007669"/>
    <property type="project" value="UniProtKB-UniRule"/>
</dbReference>
<dbReference type="GO" id="GO:0003735">
    <property type="term" value="F:structural constituent of ribosome"/>
    <property type="evidence" value="ECO:0007669"/>
    <property type="project" value="InterPro"/>
</dbReference>
<dbReference type="GO" id="GO:0008270">
    <property type="term" value="F:zinc ion binding"/>
    <property type="evidence" value="ECO:0007669"/>
    <property type="project" value="UniProtKB-UniRule"/>
</dbReference>
<dbReference type="GO" id="GO:0006412">
    <property type="term" value="P:translation"/>
    <property type="evidence" value="ECO:0007669"/>
    <property type="project" value="UniProtKB-UniRule"/>
</dbReference>
<dbReference type="Gene3D" id="4.10.830.10">
    <property type="entry name" value="30s Ribosomal Protein S14, Chain N"/>
    <property type="match status" value="1"/>
</dbReference>
<dbReference type="HAMAP" id="MF_01364_B">
    <property type="entry name" value="Ribosomal_uS14_2_B"/>
    <property type="match status" value="1"/>
</dbReference>
<dbReference type="InterPro" id="IPR001209">
    <property type="entry name" value="Ribosomal_uS14"/>
</dbReference>
<dbReference type="InterPro" id="IPR023053">
    <property type="entry name" value="Ribosomal_uS14_bact"/>
</dbReference>
<dbReference type="InterPro" id="IPR018271">
    <property type="entry name" value="Ribosomal_uS14_CS"/>
</dbReference>
<dbReference type="InterPro" id="IPR043140">
    <property type="entry name" value="Ribosomal_uS14_sf"/>
</dbReference>
<dbReference type="NCBIfam" id="NF005974">
    <property type="entry name" value="PRK08061.1"/>
    <property type="match status" value="1"/>
</dbReference>
<dbReference type="PANTHER" id="PTHR19836">
    <property type="entry name" value="30S RIBOSOMAL PROTEIN S14"/>
    <property type="match status" value="1"/>
</dbReference>
<dbReference type="PANTHER" id="PTHR19836:SF19">
    <property type="entry name" value="SMALL RIBOSOMAL SUBUNIT PROTEIN US14M"/>
    <property type="match status" value="1"/>
</dbReference>
<dbReference type="Pfam" id="PF00253">
    <property type="entry name" value="Ribosomal_S14"/>
    <property type="match status" value="1"/>
</dbReference>
<dbReference type="SUPFAM" id="SSF57716">
    <property type="entry name" value="Glucocorticoid receptor-like (DNA-binding domain)"/>
    <property type="match status" value="1"/>
</dbReference>
<dbReference type="PROSITE" id="PS00527">
    <property type="entry name" value="RIBOSOMAL_S14"/>
    <property type="match status" value="1"/>
</dbReference>
<gene>
    <name evidence="1" type="primary">rpsZ</name>
    <name evidence="1" type="synonym">rps14</name>
    <name evidence="1" type="synonym">rpsN</name>
</gene>
<accession>P0A4B2</accession>
<accession>O67567</accession>